<organism>
    <name type="scientific">Pseudomonas savastanoi pv. phaseolicola (strain 1448A / Race 6)</name>
    <name type="common">Pseudomonas syringae pv. phaseolicola (strain 1448A / Race 6)</name>
    <dbReference type="NCBI Taxonomy" id="264730"/>
    <lineage>
        <taxon>Bacteria</taxon>
        <taxon>Pseudomonadati</taxon>
        <taxon>Pseudomonadota</taxon>
        <taxon>Gammaproteobacteria</taxon>
        <taxon>Pseudomonadales</taxon>
        <taxon>Pseudomonadaceae</taxon>
        <taxon>Pseudomonas</taxon>
    </lineage>
</organism>
<evidence type="ECO:0000255" key="1">
    <source>
        <dbReference type="HAMAP-Rule" id="MF_00099"/>
    </source>
</evidence>
<evidence type="ECO:0000256" key="2">
    <source>
        <dbReference type="SAM" id="MobiDB-lite"/>
    </source>
</evidence>
<sequence length="387" mass="40781">MAVKVLVVDDSGFFRRRVTEILSSDPNIVVVGTATNGKEAIEQALALKPDVITMDYEMPMMDGITAVRHIMQRIPTPVLMFSSLTHEGARVTLDALDAGAVDFLPKNFEDISRNPQKVKQLLCEKINSISRSNRRSSGFGAASAASAAAPAAPTSSSRAPAPTTAPARAVPTRTAAPATAPAAHAHHAPAHPTTSGTPKRKAYKLVAIGTSTGGPVALQRVLTQLPASFPAPLVLIQHMPAAFTKAFAERLDKLCKISVKEAEDGDVLRPGLALLAPGGKQMMVDARGTVKILPGDERLNYKPCVDITFGSAAKSYGDKVLSVVLTGMGADGREGARLLKQAGSTVWAQDEASCVIYGMPMAIVKAELADAIYSLDDIGRHLVEACL</sequence>
<protein>
    <recommendedName>
        <fullName evidence="1">Protein-glutamate methylesterase/protein-glutamine glutaminase 2</fullName>
        <ecNumber evidence="1">3.1.1.61</ecNumber>
        <ecNumber evidence="1">3.5.1.44</ecNumber>
    </recommendedName>
</protein>
<name>CHEB2_PSE14</name>
<comment type="function">
    <text evidence="1">Involved in chemotaxis. Part of a chemotaxis signal transduction system that modulates chemotaxis in response to various stimuli. Catalyzes the demethylation of specific methylglutamate residues introduced into the chemoreceptors (methyl-accepting chemotaxis proteins or MCP) by CheR. Also mediates the irreversible deamidation of specific glutamine residues to glutamic acid.</text>
</comment>
<comment type="catalytic activity">
    <reaction evidence="1">
        <text>[protein]-L-glutamate 5-O-methyl ester + H2O = L-glutamyl-[protein] + methanol + H(+)</text>
        <dbReference type="Rhea" id="RHEA:23236"/>
        <dbReference type="Rhea" id="RHEA-COMP:10208"/>
        <dbReference type="Rhea" id="RHEA-COMP:10311"/>
        <dbReference type="ChEBI" id="CHEBI:15377"/>
        <dbReference type="ChEBI" id="CHEBI:15378"/>
        <dbReference type="ChEBI" id="CHEBI:17790"/>
        <dbReference type="ChEBI" id="CHEBI:29973"/>
        <dbReference type="ChEBI" id="CHEBI:82795"/>
        <dbReference type="EC" id="3.1.1.61"/>
    </reaction>
</comment>
<comment type="catalytic activity">
    <reaction evidence="1">
        <text>L-glutaminyl-[protein] + H2O = L-glutamyl-[protein] + NH4(+)</text>
        <dbReference type="Rhea" id="RHEA:16441"/>
        <dbReference type="Rhea" id="RHEA-COMP:10207"/>
        <dbReference type="Rhea" id="RHEA-COMP:10208"/>
        <dbReference type="ChEBI" id="CHEBI:15377"/>
        <dbReference type="ChEBI" id="CHEBI:28938"/>
        <dbReference type="ChEBI" id="CHEBI:29973"/>
        <dbReference type="ChEBI" id="CHEBI:30011"/>
        <dbReference type="EC" id="3.5.1.44"/>
    </reaction>
</comment>
<comment type="subcellular location">
    <subcellularLocation>
        <location evidence="1">Cytoplasm</location>
    </subcellularLocation>
</comment>
<comment type="domain">
    <text evidence="1">Contains a C-terminal catalytic domain, and an N-terminal region which modulates catalytic activity.</text>
</comment>
<comment type="PTM">
    <text evidence="1">Phosphorylated by CheA. Phosphorylation of the N-terminal regulatory domain activates the methylesterase activity.</text>
</comment>
<comment type="similarity">
    <text evidence="1">Belongs to the CheB family.</text>
</comment>
<reference key="1">
    <citation type="journal article" date="2005" name="J. Bacteriol.">
        <title>Whole-genome sequence analysis of Pseudomonas syringae pv. phaseolicola 1448A reveals divergence among pathovars in genes involved in virulence and transposition.</title>
        <authorList>
            <person name="Joardar V."/>
            <person name="Lindeberg M."/>
            <person name="Jackson R.W."/>
            <person name="Selengut J."/>
            <person name="Dodson R."/>
            <person name="Brinkac L.M."/>
            <person name="Daugherty S.C."/>
            <person name="DeBoy R.T."/>
            <person name="Durkin A.S."/>
            <person name="Gwinn Giglio M."/>
            <person name="Madupu R."/>
            <person name="Nelson W.C."/>
            <person name="Rosovitz M.J."/>
            <person name="Sullivan S.A."/>
            <person name="Crabtree J."/>
            <person name="Creasy T."/>
            <person name="Davidsen T.M."/>
            <person name="Haft D.H."/>
            <person name="Zafar N."/>
            <person name="Zhou L."/>
            <person name="Halpin R."/>
            <person name="Holley T."/>
            <person name="Khouri H.M."/>
            <person name="Feldblyum T.V."/>
            <person name="White O."/>
            <person name="Fraser C.M."/>
            <person name="Chatterjee A.K."/>
            <person name="Cartinhour S."/>
            <person name="Schneider D."/>
            <person name="Mansfield J.W."/>
            <person name="Collmer A."/>
            <person name="Buell R."/>
        </authorList>
    </citation>
    <scope>NUCLEOTIDE SEQUENCE [LARGE SCALE GENOMIC DNA]</scope>
    <source>
        <strain>1448A / Race 6</strain>
    </source>
</reference>
<keyword id="KW-0145">Chemotaxis</keyword>
<keyword id="KW-0963">Cytoplasm</keyword>
<keyword id="KW-0378">Hydrolase</keyword>
<keyword id="KW-0597">Phosphoprotein</keyword>
<dbReference type="EC" id="3.1.1.61" evidence="1"/>
<dbReference type="EC" id="3.5.1.44" evidence="1"/>
<dbReference type="EMBL" id="CP000058">
    <property type="protein sequence ID" value="AAZ34052.1"/>
    <property type="molecule type" value="Genomic_DNA"/>
</dbReference>
<dbReference type="RefSeq" id="WP_002554267.1">
    <property type="nucleotide sequence ID" value="NC_005773.3"/>
</dbReference>
<dbReference type="SMR" id="Q48GG6"/>
<dbReference type="KEGG" id="psp:PSPPH_3359"/>
<dbReference type="eggNOG" id="COG2201">
    <property type="taxonomic scope" value="Bacteria"/>
</dbReference>
<dbReference type="HOGENOM" id="CLU_000445_51_0_6"/>
<dbReference type="Proteomes" id="UP000000551">
    <property type="component" value="Chromosome"/>
</dbReference>
<dbReference type="GO" id="GO:0005737">
    <property type="term" value="C:cytoplasm"/>
    <property type="evidence" value="ECO:0007669"/>
    <property type="project" value="UniProtKB-SubCell"/>
</dbReference>
<dbReference type="GO" id="GO:0000156">
    <property type="term" value="F:phosphorelay response regulator activity"/>
    <property type="evidence" value="ECO:0007669"/>
    <property type="project" value="InterPro"/>
</dbReference>
<dbReference type="GO" id="GO:0008984">
    <property type="term" value="F:protein-glutamate methylesterase activity"/>
    <property type="evidence" value="ECO:0007669"/>
    <property type="project" value="UniProtKB-UniRule"/>
</dbReference>
<dbReference type="GO" id="GO:0050568">
    <property type="term" value="F:protein-glutamine glutaminase activity"/>
    <property type="evidence" value="ECO:0007669"/>
    <property type="project" value="UniProtKB-UniRule"/>
</dbReference>
<dbReference type="GO" id="GO:0006935">
    <property type="term" value="P:chemotaxis"/>
    <property type="evidence" value="ECO:0007669"/>
    <property type="project" value="UniProtKB-UniRule"/>
</dbReference>
<dbReference type="CDD" id="cd16432">
    <property type="entry name" value="CheB_Rec"/>
    <property type="match status" value="1"/>
</dbReference>
<dbReference type="CDD" id="cd17541">
    <property type="entry name" value="REC_CheB-like"/>
    <property type="match status" value="1"/>
</dbReference>
<dbReference type="FunFam" id="3.40.50.2300:FF:000077">
    <property type="entry name" value="Chemotaxis response regulator"/>
    <property type="match status" value="1"/>
</dbReference>
<dbReference type="FunFam" id="3.40.50.180:FF:000001">
    <property type="entry name" value="Protein-glutamate methylesterase/protein-glutamine glutaminase"/>
    <property type="match status" value="1"/>
</dbReference>
<dbReference type="Gene3D" id="3.40.50.2300">
    <property type="match status" value="1"/>
</dbReference>
<dbReference type="Gene3D" id="3.40.50.180">
    <property type="entry name" value="Methylesterase CheB, C-terminal domain"/>
    <property type="match status" value="1"/>
</dbReference>
<dbReference type="HAMAP" id="MF_00099">
    <property type="entry name" value="CheB_chemtxs"/>
    <property type="match status" value="1"/>
</dbReference>
<dbReference type="InterPro" id="IPR008248">
    <property type="entry name" value="CheB-like"/>
</dbReference>
<dbReference type="InterPro" id="IPR035909">
    <property type="entry name" value="CheB_C"/>
</dbReference>
<dbReference type="InterPro" id="IPR011006">
    <property type="entry name" value="CheY-like_superfamily"/>
</dbReference>
<dbReference type="InterPro" id="IPR000673">
    <property type="entry name" value="Sig_transdc_resp-reg_Me-estase"/>
</dbReference>
<dbReference type="InterPro" id="IPR001789">
    <property type="entry name" value="Sig_transdc_resp-reg_receiver"/>
</dbReference>
<dbReference type="NCBIfam" id="NF001965">
    <property type="entry name" value="PRK00742.1"/>
    <property type="match status" value="1"/>
</dbReference>
<dbReference type="PANTHER" id="PTHR42872">
    <property type="entry name" value="PROTEIN-GLUTAMATE METHYLESTERASE/PROTEIN-GLUTAMINE GLUTAMINASE"/>
    <property type="match status" value="1"/>
</dbReference>
<dbReference type="PANTHER" id="PTHR42872:SF3">
    <property type="entry name" value="PROTEIN-GLUTAMATE METHYLESTERASE_PROTEIN-GLUTAMINE GLUTAMINASE 1"/>
    <property type="match status" value="1"/>
</dbReference>
<dbReference type="Pfam" id="PF01339">
    <property type="entry name" value="CheB_methylest"/>
    <property type="match status" value="1"/>
</dbReference>
<dbReference type="Pfam" id="PF00072">
    <property type="entry name" value="Response_reg"/>
    <property type="match status" value="1"/>
</dbReference>
<dbReference type="PIRSF" id="PIRSF000876">
    <property type="entry name" value="RR_chemtxs_CheB"/>
    <property type="match status" value="1"/>
</dbReference>
<dbReference type="SMART" id="SM00448">
    <property type="entry name" value="REC"/>
    <property type="match status" value="1"/>
</dbReference>
<dbReference type="SUPFAM" id="SSF52172">
    <property type="entry name" value="CheY-like"/>
    <property type="match status" value="1"/>
</dbReference>
<dbReference type="SUPFAM" id="SSF52738">
    <property type="entry name" value="Methylesterase CheB, C-terminal domain"/>
    <property type="match status" value="1"/>
</dbReference>
<dbReference type="PROSITE" id="PS50122">
    <property type="entry name" value="CHEB"/>
    <property type="match status" value="1"/>
</dbReference>
<dbReference type="PROSITE" id="PS50110">
    <property type="entry name" value="RESPONSE_REGULATORY"/>
    <property type="match status" value="1"/>
</dbReference>
<accession>Q48GG6</accession>
<gene>
    <name evidence="1" type="primary">cheB2</name>
    <name type="ordered locus">PSPPH_3359</name>
</gene>
<proteinExistence type="inferred from homology"/>
<feature type="chain" id="PRO_0000225474" description="Protein-glutamate methylesterase/protein-glutamine glutaminase 2">
    <location>
        <begin position="1"/>
        <end position="387"/>
    </location>
</feature>
<feature type="domain" description="Response regulatory" evidence="1">
    <location>
        <begin position="4"/>
        <end position="121"/>
    </location>
</feature>
<feature type="domain" description="CheB-type methylesterase" evidence="1">
    <location>
        <begin position="192"/>
        <end position="384"/>
    </location>
</feature>
<feature type="region of interest" description="Disordered" evidence="2">
    <location>
        <begin position="148"/>
        <end position="199"/>
    </location>
</feature>
<feature type="compositionally biased region" description="Low complexity" evidence="2">
    <location>
        <begin position="148"/>
        <end position="183"/>
    </location>
</feature>
<feature type="active site" evidence="1">
    <location>
        <position position="211"/>
    </location>
</feature>
<feature type="active site" evidence="1">
    <location>
        <position position="238"/>
    </location>
</feature>
<feature type="active site" evidence="1">
    <location>
        <position position="331"/>
    </location>
</feature>
<feature type="modified residue" description="4-aspartylphosphate" evidence="1">
    <location>
        <position position="55"/>
    </location>
</feature>